<reference key="1">
    <citation type="journal article" date="2010" name="Genome Biol.">
        <title>Structure and dynamics of the pan-genome of Streptococcus pneumoniae and closely related species.</title>
        <authorList>
            <person name="Donati C."/>
            <person name="Hiller N.L."/>
            <person name="Tettelin H."/>
            <person name="Muzzi A."/>
            <person name="Croucher N.J."/>
            <person name="Angiuoli S.V."/>
            <person name="Oggioni M."/>
            <person name="Dunning Hotopp J.C."/>
            <person name="Hu F.Z."/>
            <person name="Riley D.R."/>
            <person name="Covacci A."/>
            <person name="Mitchell T.J."/>
            <person name="Bentley S.D."/>
            <person name="Kilian M."/>
            <person name="Ehrlich G.D."/>
            <person name="Rappuoli R."/>
            <person name="Moxon E.R."/>
            <person name="Masignani V."/>
        </authorList>
    </citation>
    <scope>NUCLEOTIDE SEQUENCE [LARGE SCALE GENOMIC DNA]</scope>
    <source>
        <strain>JJA</strain>
    </source>
</reference>
<keyword id="KW-0012">Acyltransferase</keyword>
<keyword id="KW-0963">Cytoplasm</keyword>
<keyword id="KW-0408">Iron</keyword>
<keyword id="KW-0479">Metal-binding</keyword>
<keyword id="KW-0808">Transferase</keyword>
<keyword id="KW-0819">tRNA processing</keyword>
<organism>
    <name type="scientific">Streptococcus pneumoniae (strain JJA)</name>
    <dbReference type="NCBI Taxonomy" id="488222"/>
    <lineage>
        <taxon>Bacteria</taxon>
        <taxon>Bacillati</taxon>
        <taxon>Bacillota</taxon>
        <taxon>Bacilli</taxon>
        <taxon>Lactobacillales</taxon>
        <taxon>Streptococcaceae</taxon>
        <taxon>Streptococcus</taxon>
    </lineage>
</organism>
<evidence type="ECO:0000255" key="1">
    <source>
        <dbReference type="HAMAP-Rule" id="MF_01445"/>
    </source>
</evidence>
<comment type="function">
    <text evidence="1">Required for the formation of a threonylcarbamoyl group on adenosine at position 37 (t(6)A37) in tRNAs that read codons beginning with adenine. Is involved in the transfer of the threonylcarbamoyl moiety of threonylcarbamoyl-AMP (TC-AMP) to the N6 group of A37, together with TsaE and TsaB. TsaD likely plays a direct catalytic role in this reaction.</text>
</comment>
<comment type="catalytic activity">
    <reaction evidence="1">
        <text>L-threonylcarbamoyladenylate + adenosine(37) in tRNA = N(6)-L-threonylcarbamoyladenosine(37) in tRNA + AMP + H(+)</text>
        <dbReference type="Rhea" id="RHEA:37059"/>
        <dbReference type="Rhea" id="RHEA-COMP:10162"/>
        <dbReference type="Rhea" id="RHEA-COMP:10163"/>
        <dbReference type="ChEBI" id="CHEBI:15378"/>
        <dbReference type="ChEBI" id="CHEBI:73682"/>
        <dbReference type="ChEBI" id="CHEBI:74411"/>
        <dbReference type="ChEBI" id="CHEBI:74418"/>
        <dbReference type="ChEBI" id="CHEBI:456215"/>
        <dbReference type="EC" id="2.3.1.234"/>
    </reaction>
</comment>
<comment type="cofactor">
    <cofactor evidence="1">
        <name>Fe(2+)</name>
        <dbReference type="ChEBI" id="CHEBI:29033"/>
    </cofactor>
    <text evidence="1">Binds 1 Fe(2+) ion per subunit.</text>
</comment>
<comment type="subcellular location">
    <subcellularLocation>
        <location evidence="1">Cytoplasm</location>
    </subcellularLocation>
</comment>
<comment type="similarity">
    <text evidence="1">Belongs to the KAE1 / TsaD family.</text>
</comment>
<protein>
    <recommendedName>
        <fullName evidence="1">tRNA N6-adenosine threonylcarbamoyltransferase</fullName>
        <ecNumber evidence="1">2.3.1.234</ecNumber>
    </recommendedName>
    <alternativeName>
        <fullName evidence="1">N6-L-threonylcarbamoyladenine synthase</fullName>
        <shortName evidence="1">t(6)A synthase</shortName>
    </alternativeName>
    <alternativeName>
        <fullName evidence="1">t(6)A37 threonylcarbamoyladenosine biosynthesis protein TsaD</fullName>
    </alternativeName>
    <alternativeName>
        <fullName evidence="1">tRNA threonylcarbamoyladenosine biosynthesis protein TsaD</fullName>
    </alternativeName>
</protein>
<sequence length="336" mass="36173">MKDRYILAFETSCDETSVAVLKNDDELLSNVIASQIESHKRFGGVVPEVASRHHVEVITACIEEALAEAGITEEDVTAVAVTYGPGLVGALLVGLSAAKAFAWAHGLPLIPVNHMAGHLMAAQSVEPLEFPLLALLVSGGHTELVYVSEAGDYKIVGETRDDAVGEAYDKVGRVMGLTYPAGREIDELAHQGQDIYDFPRAMIKEDNLEFSFSGLKSAFINLHHNAEQKGESLSTEDLCASFQAAVMDILMAKTKKALEKYPVKTLVVAGGVAANKGLRERLAAEITDVKVIIPPLRLCGDNAGMIAYASVSEWNKENFAGWDLNAKPSLAFDTME</sequence>
<feature type="chain" id="PRO_1000184985" description="tRNA N6-adenosine threonylcarbamoyltransferase">
    <location>
        <begin position="1"/>
        <end position="336"/>
    </location>
</feature>
<feature type="binding site" evidence="1">
    <location>
        <position position="114"/>
    </location>
    <ligand>
        <name>Fe cation</name>
        <dbReference type="ChEBI" id="CHEBI:24875"/>
    </ligand>
</feature>
<feature type="binding site" evidence="1">
    <location>
        <position position="118"/>
    </location>
    <ligand>
        <name>Fe cation</name>
        <dbReference type="ChEBI" id="CHEBI:24875"/>
    </ligand>
</feature>
<feature type="binding site" evidence="1">
    <location>
        <begin position="136"/>
        <end position="140"/>
    </location>
    <ligand>
        <name>substrate</name>
    </ligand>
</feature>
<feature type="binding site" evidence="1">
    <location>
        <position position="169"/>
    </location>
    <ligand>
        <name>substrate</name>
    </ligand>
</feature>
<feature type="binding site" evidence="1">
    <location>
        <position position="182"/>
    </location>
    <ligand>
        <name>substrate</name>
    </ligand>
</feature>
<feature type="binding site" evidence="1">
    <location>
        <position position="186"/>
    </location>
    <ligand>
        <name>substrate</name>
    </ligand>
</feature>
<feature type="binding site" evidence="1">
    <location>
        <position position="275"/>
    </location>
    <ligand>
        <name>substrate</name>
    </ligand>
</feature>
<feature type="binding site" evidence="1">
    <location>
        <position position="301"/>
    </location>
    <ligand>
        <name>Fe cation</name>
        <dbReference type="ChEBI" id="CHEBI:24875"/>
    </ligand>
</feature>
<gene>
    <name evidence="1" type="primary">tsaD</name>
    <name type="synonym">gcp</name>
    <name type="ordered locus">SPJ_0161</name>
</gene>
<name>TSAD_STRZJ</name>
<accession>C1CBV0</accession>
<proteinExistence type="inferred from homology"/>
<dbReference type="EC" id="2.3.1.234" evidence="1"/>
<dbReference type="EMBL" id="CP000919">
    <property type="protein sequence ID" value="ACO19391.1"/>
    <property type="molecule type" value="Genomic_DNA"/>
</dbReference>
<dbReference type="RefSeq" id="WP_000655047.1">
    <property type="nucleotide sequence ID" value="NC_012466.1"/>
</dbReference>
<dbReference type="SMR" id="C1CBV0"/>
<dbReference type="KEGG" id="sjj:SPJ_0161"/>
<dbReference type="HOGENOM" id="CLU_023208_0_2_9"/>
<dbReference type="Proteomes" id="UP000002206">
    <property type="component" value="Chromosome"/>
</dbReference>
<dbReference type="GO" id="GO:0005737">
    <property type="term" value="C:cytoplasm"/>
    <property type="evidence" value="ECO:0007669"/>
    <property type="project" value="UniProtKB-SubCell"/>
</dbReference>
<dbReference type="GO" id="GO:0005506">
    <property type="term" value="F:iron ion binding"/>
    <property type="evidence" value="ECO:0007669"/>
    <property type="project" value="UniProtKB-UniRule"/>
</dbReference>
<dbReference type="GO" id="GO:0061711">
    <property type="term" value="F:N(6)-L-threonylcarbamoyladenine synthase activity"/>
    <property type="evidence" value="ECO:0007669"/>
    <property type="project" value="UniProtKB-EC"/>
</dbReference>
<dbReference type="GO" id="GO:0002949">
    <property type="term" value="P:tRNA threonylcarbamoyladenosine modification"/>
    <property type="evidence" value="ECO:0007669"/>
    <property type="project" value="UniProtKB-UniRule"/>
</dbReference>
<dbReference type="CDD" id="cd24133">
    <property type="entry name" value="ASKHA_NBD_TsaD_bac"/>
    <property type="match status" value="1"/>
</dbReference>
<dbReference type="FunFam" id="3.30.420.40:FF:000012">
    <property type="entry name" value="tRNA N6-adenosine threonylcarbamoyltransferase"/>
    <property type="match status" value="1"/>
</dbReference>
<dbReference type="FunFam" id="3.30.420.40:FF:000040">
    <property type="entry name" value="tRNA N6-adenosine threonylcarbamoyltransferase"/>
    <property type="match status" value="1"/>
</dbReference>
<dbReference type="Gene3D" id="3.30.420.40">
    <property type="match status" value="2"/>
</dbReference>
<dbReference type="HAMAP" id="MF_01445">
    <property type="entry name" value="TsaD"/>
    <property type="match status" value="1"/>
</dbReference>
<dbReference type="InterPro" id="IPR043129">
    <property type="entry name" value="ATPase_NBD"/>
</dbReference>
<dbReference type="InterPro" id="IPR000905">
    <property type="entry name" value="Gcp-like_dom"/>
</dbReference>
<dbReference type="InterPro" id="IPR017861">
    <property type="entry name" value="KAE1/TsaD"/>
</dbReference>
<dbReference type="InterPro" id="IPR017860">
    <property type="entry name" value="Peptidase_M22_CS"/>
</dbReference>
<dbReference type="InterPro" id="IPR022450">
    <property type="entry name" value="TsaD"/>
</dbReference>
<dbReference type="NCBIfam" id="TIGR00329">
    <property type="entry name" value="gcp_kae1"/>
    <property type="match status" value="1"/>
</dbReference>
<dbReference type="NCBIfam" id="TIGR03723">
    <property type="entry name" value="T6A_TsaD_YgjD"/>
    <property type="match status" value="1"/>
</dbReference>
<dbReference type="PANTHER" id="PTHR11735">
    <property type="entry name" value="TRNA N6-ADENOSINE THREONYLCARBAMOYLTRANSFERASE"/>
    <property type="match status" value="1"/>
</dbReference>
<dbReference type="PANTHER" id="PTHR11735:SF6">
    <property type="entry name" value="TRNA N6-ADENOSINE THREONYLCARBAMOYLTRANSFERASE, MITOCHONDRIAL"/>
    <property type="match status" value="1"/>
</dbReference>
<dbReference type="Pfam" id="PF00814">
    <property type="entry name" value="TsaD"/>
    <property type="match status" value="1"/>
</dbReference>
<dbReference type="PRINTS" id="PR00789">
    <property type="entry name" value="OSIALOPTASE"/>
</dbReference>
<dbReference type="SUPFAM" id="SSF53067">
    <property type="entry name" value="Actin-like ATPase domain"/>
    <property type="match status" value="1"/>
</dbReference>
<dbReference type="PROSITE" id="PS01016">
    <property type="entry name" value="GLYCOPROTEASE"/>
    <property type="match status" value="1"/>
</dbReference>